<proteinExistence type="inferred from homology"/>
<protein>
    <recommendedName>
        <fullName>Nucleotide-binding protein HI1146 homolog</fullName>
    </recommendedName>
</protein>
<sequence length="110" mass="12481">WPPLHPLYRTDLSLEAAIEEEANRLDPLVQQANLLIDTAALSTHELAERLREFLSGHSDKELKIVVESFGFKYGIPLDADYVFDVRFLPNPHWNQGLRPLTGLDDEVANS</sequence>
<reference key="1">
    <citation type="journal article" date="1998" name="FEMS Microbiol. Lett.">
        <title>Codon usage in Actinobacillus actinomycetemcomitans.</title>
        <authorList>
            <person name="Kaplan J.B."/>
            <person name="Fine D.H."/>
        </authorList>
    </citation>
    <scope>NUCLEOTIDE SEQUENCE [GENOMIC DNA]</scope>
    <source>
        <strain>CU1000</strain>
    </source>
</reference>
<accession>P96769</accession>
<keyword id="KW-0067">ATP-binding</keyword>
<keyword id="KW-0342">GTP-binding</keyword>
<keyword id="KW-0547">Nucleotide-binding</keyword>
<dbReference type="EMBL" id="U89523">
    <property type="protein sequence ID" value="AAC46410.1"/>
    <property type="molecule type" value="Genomic_DNA"/>
</dbReference>
<dbReference type="SMR" id="P96769"/>
<dbReference type="STRING" id="714.ACT75_02750"/>
<dbReference type="eggNOG" id="COG1660">
    <property type="taxonomic scope" value="Bacteria"/>
</dbReference>
<dbReference type="GO" id="GO:0005524">
    <property type="term" value="F:ATP binding"/>
    <property type="evidence" value="ECO:0007669"/>
    <property type="project" value="UniProtKB-KW"/>
</dbReference>
<dbReference type="GO" id="GO:0005525">
    <property type="term" value="F:GTP binding"/>
    <property type="evidence" value="ECO:0007669"/>
    <property type="project" value="UniProtKB-KW"/>
</dbReference>
<dbReference type="InterPro" id="IPR005337">
    <property type="entry name" value="RapZ-like"/>
</dbReference>
<dbReference type="InterPro" id="IPR053930">
    <property type="entry name" value="RapZ-like_N"/>
</dbReference>
<dbReference type="InterPro" id="IPR053931">
    <property type="entry name" value="RapZ_C"/>
</dbReference>
<dbReference type="PANTHER" id="PTHR30448">
    <property type="entry name" value="RNASE ADAPTER PROTEIN RAPZ"/>
    <property type="match status" value="1"/>
</dbReference>
<dbReference type="PANTHER" id="PTHR30448:SF0">
    <property type="entry name" value="RNASE ADAPTER PROTEIN RAPZ"/>
    <property type="match status" value="1"/>
</dbReference>
<dbReference type="Pfam" id="PF22740">
    <property type="entry name" value="PapZ_C"/>
    <property type="match status" value="1"/>
</dbReference>
<dbReference type="Pfam" id="PF03668">
    <property type="entry name" value="RapZ-like_N"/>
    <property type="match status" value="1"/>
</dbReference>
<feature type="chain" id="PRO_0000107679" description="Nucleotide-binding protein HI1146 homolog">
    <location>
        <begin position="1" status="less than"/>
        <end position="110" status="greater than"/>
    </location>
</feature>
<feature type="non-terminal residue">
    <location>
        <position position="1"/>
    </location>
</feature>
<feature type="non-terminal residue">
    <location>
        <position position="110"/>
    </location>
</feature>
<organism>
    <name type="scientific">Aggregatibacter actinomycetemcomitans</name>
    <name type="common">Actinobacillus actinomycetemcomitans</name>
    <name type="synonym">Haemophilus actinomycetemcomitans</name>
    <dbReference type="NCBI Taxonomy" id="714"/>
    <lineage>
        <taxon>Bacteria</taxon>
        <taxon>Pseudomonadati</taxon>
        <taxon>Pseudomonadota</taxon>
        <taxon>Gammaproteobacteria</taxon>
        <taxon>Pasteurellales</taxon>
        <taxon>Pasteurellaceae</taxon>
        <taxon>Aggregatibacter</taxon>
    </lineage>
</organism>
<name>YHBJ_AGGAC</name>
<evidence type="ECO:0000250" key="1"/>
<evidence type="ECO:0000305" key="2"/>
<comment type="function">
    <text evidence="1">Displays ATPase and GTPase activities.</text>
</comment>
<comment type="similarity">
    <text evidence="2">Belongs to the RapZ-like family.</text>
</comment>